<proteinExistence type="inferred from homology"/>
<accession>Q47BG6</accession>
<keyword id="KW-0030">Aminoacyl-tRNA synthetase</keyword>
<keyword id="KW-0067">ATP-binding</keyword>
<keyword id="KW-0175">Coiled coil</keyword>
<keyword id="KW-0963">Cytoplasm</keyword>
<keyword id="KW-0436">Ligase</keyword>
<keyword id="KW-0547">Nucleotide-binding</keyword>
<keyword id="KW-0648">Protein biosynthesis</keyword>
<organism>
    <name type="scientific">Dechloromonas aromatica (strain RCB)</name>
    <dbReference type="NCBI Taxonomy" id="159087"/>
    <lineage>
        <taxon>Bacteria</taxon>
        <taxon>Pseudomonadati</taxon>
        <taxon>Pseudomonadota</taxon>
        <taxon>Betaproteobacteria</taxon>
        <taxon>Rhodocyclales</taxon>
        <taxon>Azonexaceae</taxon>
        <taxon>Dechloromonas</taxon>
    </lineage>
</organism>
<protein>
    <recommendedName>
        <fullName evidence="1">Valine--tRNA ligase</fullName>
        <ecNumber evidence="1">6.1.1.9</ecNumber>
    </recommendedName>
    <alternativeName>
        <fullName evidence="1">Valyl-tRNA synthetase</fullName>
        <shortName evidence="1">ValRS</shortName>
    </alternativeName>
</protein>
<feature type="chain" id="PRO_0000224470" description="Valine--tRNA ligase">
    <location>
        <begin position="1"/>
        <end position="943"/>
    </location>
</feature>
<feature type="coiled-coil region" evidence="1">
    <location>
        <begin position="875"/>
        <end position="934"/>
    </location>
</feature>
<feature type="short sequence motif" description="'HIGH' region">
    <location>
        <begin position="45"/>
        <end position="55"/>
    </location>
</feature>
<feature type="short sequence motif" description="'KMSKS' region">
    <location>
        <begin position="541"/>
        <end position="545"/>
    </location>
</feature>
<feature type="binding site" evidence="1">
    <location>
        <position position="544"/>
    </location>
    <ligand>
        <name>ATP</name>
        <dbReference type="ChEBI" id="CHEBI:30616"/>
    </ligand>
</feature>
<name>SYV_DECAR</name>
<reference key="1">
    <citation type="journal article" date="2009" name="BMC Genomics">
        <title>Metabolic analysis of the soil microbe Dechloromonas aromatica str. RCB: indications of a surprisingly complex life-style and cryptic anaerobic pathways for aromatic degradation.</title>
        <authorList>
            <person name="Salinero K.K."/>
            <person name="Keller K."/>
            <person name="Feil W.S."/>
            <person name="Feil H."/>
            <person name="Trong S."/>
            <person name="Di Bartolo G."/>
            <person name="Lapidus A."/>
        </authorList>
    </citation>
    <scope>NUCLEOTIDE SEQUENCE [LARGE SCALE GENOMIC DNA]</scope>
    <source>
        <strain>RCB</strain>
    </source>
</reference>
<evidence type="ECO:0000255" key="1">
    <source>
        <dbReference type="HAMAP-Rule" id="MF_02004"/>
    </source>
</evidence>
<gene>
    <name evidence="1" type="primary">valS</name>
    <name type="ordered locus">Daro_3085</name>
</gene>
<dbReference type="EC" id="6.1.1.9" evidence="1"/>
<dbReference type="EMBL" id="CP000089">
    <property type="protein sequence ID" value="AAZ47815.1"/>
    <property type="molecule type" value="Genomic_DNA"/>
</dbReference>
<dbReference type="SMR" id="Q47BG6"/>
<dbReference type="STRING" id="159087.Daro_3085"/>
<dbReference type="KEGG" id="dar:Daro_3085"/>
<dbReference type="eggNOG" id="COG0525">
    <property type="taxonomic scope" value="Bacteria"/>
</dbReference>
<dbReference type="HOGENOM" id="CLU_001493_0_2_4"/>
<dbReference type="OrthoDB" id="9810365at2"/>
<dbReference type="GO" id="GO:0005829">
    <property type="term" value="C:cytosol"/>
    <property type="evidence" value="ECO:0007669"/>
    <property type="project" value="TreeGrafter"/>
</dbReference>
<dbReference type="GO" id="GO:0002161">
    <property type="term" value="F:aminoacyl-tRNA deacylase activity"/>
    <property type="evidence" value="ECO:0007669"/>
    <property type="project" value="InterPro"/>
</dbReference>
<dbReference type="GO" id="GO:0005524">
    <property type="term" value="F:ATP binding"/>
    <property type="evidence" value="ECO:0007669"/>
    <property type="project" value="UniProtKB-UniRule"/>
</dbReference>
<dbReference type="GO" id="GO:0004832">
    <property type="term" value="F:valine-tRNA ligase activity"/>
    <property type="evidence" value="ECO:0007669"/>
    <property type="project" value="UniProtKB-UniRule"/>
</dbReference>
<dbReference type="GO" id="GO:0006438">
    <property type="term" value="P:valyl-tRNA aminoacylation"/>
    <property type="evidence" value="ECO:0007669"/>
    <property type="project" value="UniProtKB-UniRule"/>
</dbReference>
<dbReference type="CDD" id="cd07962">
    <property type="entry name" value="Anticodon_Ia_Val"/>
    <property type="match status" value="1"/>
</dbReference>
<dbReference type="CDD" id="cd00817">
    <property type="entry name" value="ValRS_core"/>
    <property type="match status" value="1"/>
</dbReference>
<dbReference type="FunFam" id="3.40.50.620:FF:000457">
    <property type="entry name" value="Predicted protein"/>
    <property type="match status" value="1"/>
</dbReference>
<dbReference type="FunFam" id="1.10.287.380:FF:000001">
    <property type="entry name" value="Valine--tRNA ligase"/>
    <property type="match status" value="1"/>
</dbReference>
<dbReference type="FunFam" id="3.40.50.620:FF:000032">
    <property type="entry name" value="Valine--tRNA ligase"/>
    <property type="match status" value="1"/>
</dbReference>
<dbReference type="FunFam" id="1.10.730.10:FF:000009">
    <property type="entry name" value="Valine--tRNA ligase, mitochondrial"/>
    <property type="match status" value="1"/>
</dbReference>
<dbReference type="FunFam" id="3.90.740.10:FF:000005">
    <property type="entry name" value="Valine--tRNA ligase, mitochondrial"/>
    <property type="match status" value="1"/>
</dbReference>
<dbReference type="Gene3D" id="3.40.50.620">
    <property type="entry name" value="HUPs"/>
    <property type="match status" value="2"/>
</dbReference>
<dbReference type="Gene3D" id="1.10.730.10">
    <property type="entry name" value="Isoleucyl-tRNA Synthetase, Domain 1"/>
    <property type="match status" value="1"/>
</dbReference>
<dbReference type="Gene3D" id="1.10.287.380">
    <property type="entry name" value="Valyl-tRNA synthetase, C-terminal domain"/>
    <property type="match status" value="1"/>
</dbReference>
<dbReference type="Gene3D" id="3.90.740.10">
    <property type="entry name" value="Valyl/Leucyl/Isoleucyl-tRNA synthetase, editing domain"/>
    <property type="match status" value="1"/>
</dbReference>
<dbReference type="HAMAP" id="MF_02004">
    <property type="entry name" value="Val_tRNA_synth_type1"/>
    <property type="match status" value="1"/>
</dbReference>
<dbReference type="InterPro" id="IPR001412">
    <property type="entry name" value="aa-tRNA-synth_I_CS"/>
</dbReference>
<dbReference type="InterPro" id="IPR002300">
    <property type="entry name" value="aa-tRNA-synth_Ia"/>
</dbReference>
<dbReference type="InterPro" id="IPR033705">
    <property type="entry name" value="Anticodon_Ia_Val"/>
</dbReference>
<dbReference type="InterPro" id="IPR013155">
    <property type="entry name" value="M/V/L/I-tRNA-synth_anticd-bd"/>
</dbReference>
<dbReference type="InterPro" id="IPR014729">
    <property type="entry name" value="Rossmann-like_a/b/a_fold"/>
</dbReference>
<dbReference type="InterPro" id="IPR010978">
    <property type="entry name" value="tRNA-bd_arm"/>
</dbReference>
<dbReference type="InterPro" id="IPR009080">
    <property type="entry name" value="tRNAsynth_Ia_anticodon-bd"/>
</dbReference>
<dbReference type="InterPro" id="IPR037118">
    <property type="entry name" value="Val-tRNA_synth_C_sf"/>
</dbReference>
<dbReference type="InterPro" id="IPR019499">
    <property type="entry name" value="Val-tRNA_synth_tRNA-bd"/>
</dbReference>
<dbReference type="InterPro" id="IPR009008">
    <property type="entry name" value="Val/Leu/Ile-tRNA-synth_edit"/>
</dbReference>
<dbReference type="InterPro" id="IPR002303">
    <property type="entry name" value="Valyl-tRNA_ligase"/>
</dbReference>
<dbReference type="NCBIfam" id="NF004349">
    <property type="entry name" value="PRK05729.1"/>
    <property type="match status" value="1"/>
</dbReference>
<dbReference type="NCBIfam" id="TIGR00422">
    <property type="entry name" value="valS"/>
    <property type="match status" value="1"/>
</dbReference>
<dbReference type="PANTHER" id="PTHR11946:SF93">
    <property type="entry name" value="VALINE--TRNA LIGASE, CHLOROPLASTIC_MITOCHONDRIAL 2"/>
    <property type="match status" value="1"/>
</dbReference>
<dbReference type="PANTHER" id="PTHR11946">
    <property type="entry name" value="VALYL-TRNA SYNTHETASES"/>
    <property type="match status" value="1"/>
</dbReference>
<dbReference type="Pfam" id="PF08264">
    <property type="entry name" value="Anticodon_1"/>
    <property type="match status" value="1"/>
</dbReference>
<dbReference type="Pfam" id="PF00133">
    <property type="entry name" value="tRNA-synt_1"/>
    <property type="match status" value="1"/>
</dbReference>
<dbReference type="Pfam" id="PF10458">
    <property type="entry name" value="Val_tRNA-synt_C"/>
    <property type="match status" value="1"/>
</dbReference>
<dbReference type="PRINTS" id="PR00986">
    <property type="entry name" value="TRNASYNTHVAL"/>
</dbReference>
<dbReference type="SUPFAM" id="SSF47323">
    <property type="entry name" value="Anticodon-binding domain of a subclass of class I aminoacyl-tRNA synthetases"/>
    <property type="match status" value="1"/>
</dbReference>
<dbReference type="SUPFAM" id="SSF52374">
    <property type="entry name" value="Nucleotidylyl transferase"/>
    <property type="match status" value="1"/>
</dbReference>
<dbReference type="SUPFAM" id="SSF46589">
    <property type="entry name" value="tRNA-binding arm"/>
    <property type="match status" value="1"/>
</dbReference>
<dbReference type="SUPFAM" id="SSF50677">
    <property type="entry name" value="ValRS/IleRS/LeuRS editing domain"/>
    <property type="match status" value="1"/>
</dbReference>
<dbReference type="PROSITE" id="PS00178">
    <property type="entry name" value="AA_TRNA_LIGASE_I"/>
    <property type="match status" value="1"/>
</dbReference>
<comment type="function">
    <text evidence="1">Catalyzes the attachment of valine to tRNA(Val). As ValRS can inadvertently accommodate and process structurally similar amino acids such as threonine, to avoid such errors, it has a 'posttransfer' editing activity that hydrolyzes mischarged Thr-tRNA(Val) in a tRNA-dependent manner.</text>
</comment>
<comment type="catalytic activity">
    <reaction evidence="1">
        <text>tRNA(Val) + L-valine + ATP = L-valyl-tRNA(Val) + AMP + diphosphate</text>
        <dbReference type="Rhea" id="RHEA:10704"/>
        <dbReference type="Rhea" id="RHEA-COMP:9672"/>
        <dbReference type="Rhea" id="RHEA-COMP:9708"/>
        <dbReference type="ChEBI" id="CHEBI:30616"/>
        <dbReference type="ChEBI" id="CHEBI:33019"/>
        <dbReference type="ChEBI" id="CHEBI:57762"/>
        <dbReference type="ChEBI" id="CHEBI:78442"/>
        <dbReference type="ChEBI" id="CHEBI:78537"/>
        <dbReference type="ChEBI" id="CHEBI:456215"/>
        <dbReference type="EC" id="6.1.1.9"/>
    </reaction>
</comment>
<comment type="subunit">
    <text evidence="1">Monomer.</text>
</comment>
<comment type="subcellular location">
    <subcellularLocation>
        <location evidence="1">Cytoplasm</location>
    </subcellularLocation>
</comment>
<comment type="domain">
    <text evidence="1">ValRS has two distinct active sites: one for aminoacylation and one for editing. The misactivated threonine is translocated from the active site to the editing site.</text>
</comment>
<comment type="domain">
    <text evidence="1">The C-terminal coiled-coil domain is crucial for aminoacylation activity.</text>
</comment>
<comment type="similarity">
    <text evidence="1">Belongs to the class-I aminoacyl-tRNA synthetase family. ValS type 1 subfamily.</text>
</comment>
<sequence length="943" mass="106500">MELAKAFEPADIERRWYPEWETQNYFAAGVDASKADNFCILLPPPNVTGTLHMGHGFNQTIMDALTRYYRMRGHNTLWQPGTDHAGIATQIVVERQLDAQGISRHDLGREKFLEKVWEWKEYSGNTITKQMRRMGTSPDWKRERFTMDAGLNKVVTETFVRLFNEGLIYRGKRLVNWDPKLNTAVSDLEVVQEEEDGFMWHIRYPLADGSDSLVVATTRPETMLGDTAVMVHPEDERYKHMIGQMVKLPLTDREIPIIADSYVDLEFGTGCVKVTPAHDFNDYAVGQRHGLPMISILTLDAKVNENAPEKYRGLDRFDARKAVVADLEALGILEKTDKHKLKVPRGDRTNVVIEPMLTDQWFVAMSKPGDDGKSITEKALDVVHSGEIKFYPENWVNTYNQWLNNIQDWCISRQLWWGHQIPAWYGDNGQIFVAHSEAEAKAEAAKQGYTGTLKRDEDVLDTWFSSALWPFSTLDWTGDEAIDAANPLLKQYLPSSVLVTGFDIIFFWVARMVMMTKQITGQIPFKHVYVHGLIRDGEGQKMSKSKGNVLDPIDLIDGIGLEALIEKRTTGLMNPKQAESIAKKTKKEFPEGIASFGTDALRFTFASLASPGRDIKFDLNRCDGYRNFCNKLWNATRFVLMNVEGHDLALEHQQNGPACGGSAPLEFSFADRWIVSQLQRVEQEVEQHFTDYRFDLIAQAIYKFIWDEFCDWYLEIAKVEIQTGNDAQQRGARRTLVRTLEAVLRLAHPLIPFITEELWQTVAPIAGRKTHDSIMLAAYPRAEEYKIDAASEAKVERLKALAYACRNLRGEMNVSPALRMPLLVAGGGAEISEFAAILQALGKLSEVQIVDDMPADAMAPVAVVGETRLMLKVEIDVAAERIRLAKEIEKLEKQISIAQGKLANEGFVARAPAAVIDQEKQRVADFTATLEQLKPQLAKLGQA</sequence>